<gene>
    <name evidence="1" type="primary">rimP</name>
    <name type="ordered locus">KRH_16070</name>
</gene>
<feature type="chain" id="PRO_0000384689" description="Ribosome maturation factor RimP">
    <location>
        <begin position="1"/>
        <end position="163"/>
    </location>
</feature>
<feature type="region of interest" description="Disordered" evidence="2">
    <location>
        <begin position="66"/>
        <end position="85"/>
    </location>
</feature>
<sequence>MSSEHHAPIRATVEPVVAAAGLHLEECELKGQGATRTLQVLVDLPDGTEALGLDRVAAVAQEISDALDRDDPVPGPPYELEVSSPGATRTLETPRHWRRTVGHLVRIRTLEGERYTARLLEAHEDHAVVQRSHQPKKGMPVKLLDPERVDYASIRTARSEVEN</sequence>
<keyword id="KW-0963">Cytoplasm</keyword>
<keyword id="KW-1185">Reference proteome</keyword>
<keyword id="KW-0690">Ribosome biogenesis</keyword>
<reference key="1">
    <citation type="journal article" date="2008" name="J. Bacteriol.">
        <title>Complete genome sequence of the soil actinomycete Kocuria rhizophila.</title>
        <authorList>
            <person name="Takarada H."/>
            <person name="Sekine M."/>
            <person name="Kosugi H."/>
            <person name="Matsuo Y."/>
            <person name="Fujisawa T."/>
            <person name="Omata S."/>
            <person name="Kishi E."/>
            <person name="Shimizu A."/>
            <person name="Tsukatani N."/>
            <person name="Tanikawa S."/>
            <person name="Fujita N."/>
            <person name="Harayama S."/>
        </authorList>
    </citation>
    <scope>NUCLEOTIDE SEQUENCE [LARGE SCALE GENOMIC DNA]</scope>
    <source>
        <strain>ATCC 9341 / DSM 348 / NBRC 103217 / DC2201</strain>
    </source>
</reference>
<protein>
    <recommendedName>
        <fullName evidence="1">Ribosome maturation factor RimP</fullName>
    </recommendedName>
</protein>
<dbReference type="EMBL" id="AP009152">
    <property type="protein sequence ID" value="BAG29954.1"/>
    <property type="molecule type" value="Genomic_DNA"/>
</dbReference>
<dbReference type="RefSeq" id="WP_012398675.1">
    <property type="nucleotide sequence ID" value="NC_010617.1"/>
</dbReference>
<dbReference type="SMR" id="B2GKR8"/>
<dbReference type="STRING" id="378753.KRH_16070"/>
<dbReference type="KEGG" id="krh:KRH_16070"/>
<dbReference type="eggNOG" id="COG0779">
    <property type="taxonomic scope" value="Bacteria"/>
</dbReference>
<dbReference type="HOGENOM" id="CLU_070525_3_0_11"/>
<dbReference type="OrthoDB" id="9805006at2"/>
<dbReference type="Proteomes" id="UP000008838">
    <property type="component" value="Chromosome"/>
</dbReference>
<dbReference type="GO" id="GO:0005829">
    <property type="term" value="C:cytosol"/>
    <property type="evidence" value="ECO:0007669"/>
    <property type="project" value="TreeGrafter"/>
</dbReference>
<dbReference type="GO" id="GO:0000028">
    <property type="term" value="P:ribosomal small subunit assembly"/>
    <property type="evidence" value="ECO:0007669"/>
    <property type="project" value="TreeGrafter"/>
</dbReference>
<dbReference type="GO" id="GO:0006412">
    <property type="term" value="P:translation"/>
    <property type="evidence" value="ECO:0007669"/>
    <property type="project" value="TreeGrafter"/>
</dbReference>
<dbReference type="Gene3D" id="3.30.300.70">
    <property type="entry name" value="RimP-like superfamily, N-terminal"/>
    <property type="match status" value="1"/>
</dbReference>
<dbReference type="HAMAP" id="MF_01077">
    <property type="entry name" value="RimP"/>
    <property type="match status" value="1"/>
</dbReference>
<dbReference type="InterPro" id="IPR003728">
    <property type="entry name" value="Ribosome_maturation_RimP"/>
</dbReference>
<dbReference type="InterPro" id="IPR028998">
    <property type="entry name" value="RimP_C"/>
</dbReference>
<dbReference type="InterPro" id="IPR028989">
    <property type="entry name" value="RimP_N"/>
</dbReference>
<dbReference type="InterPro" id="IPR035956">
    <property type="entry name" value="RimP_N_sf"/>
</dbReference>
<dbReference type="PANTHER" id="PTHR33867">
    <property type="entry name" value="RIBOSOME MATURATION FACTOR RIMP"/>
    <property type="match status" value="1"/>
</dbReference>
<dbReference type="PANTHER" id="PTHR33867:SF1">
    <property type="entry name" value="RIBOSOME MATURATION FACTOR RIMP"/>
    <property type="match status" value="1"/>
</dbReference>
<dbReference type="Pfam" id="PF17384">
    <property type="entry name" value="DUF150_C"/>
    <property type="match status" value="1"/>
</dbReference>
<dbReference type="Pfam" id="PF02576">
    <property type="entry name" value="RimP_N"/>
    <property type="match status" value="1"/>
</dbReference>
<dbReference type="SUPFAM" id="SSF75420">
    <property type="entry name" value="YhbC-like, N-terminal domain"/>
    <property type="match status" value="1"/>
</dbReference>
<name>RIMP_KOCRD</name>
<evidence type="ECO:0000255" key="1">
    <source>
        <dbReference type="HAMAP-Rule" id="MF_01077"/>
    </source>
</evidence>
<evidence type="ECO:0000256" key="2">
    <source>
        <dbReference type="SAM" id="MobiDB-lite"/>
    </source>
</evidence>
<accession>B2GKR8</accession>
<proteinExistence type="inferred from homology"/>
<organism>
    <name type="scientific">Kocuria rhizophila (strain ATCC 9341 / DSM 348 / NBRC 103217 / DC2201)</name>
    <dbReference type="NCBI Taxonomy" id="378753"/>
    <lineage>
        <taxon>Bacteria</taxon>
        <taxon>Bacillati</taxon>
        <taxon>Actinomycetota</taxon>
        <taxon>Actinomycetes</taxon>
        <taxon>Micrococcales</taxon>
        <taxon>Micrococcaceae</taxon>
        <taxon>Kocuria</taxon>
    </lineage>
</organism>
<comment type="function">
    <text evidence="1">Required for maturation of 30S ribosomal subunits.</text>
</comment>
<comment type="subcellular location">
    <subcellularLocation>
        <location evidence="1">Cytoplasm</location>
    </subcellularLocation>
</comment>
<comment type="similarity">
    <text evidence="1">Belongs to the RimP family.</text>
</comment>